<name>NHRF2_RABIT</name>
<protein>
    <recommendedName>
        <fullName evidence="7">Na(+)/H(+) exchange regulatory cofactor NHE-RF2</fullName>
    </recommendedName>
    <alternativeName>
        <fullName>PDZ domain-containing protein NHERF-2</fullName>
    </alternativeName>
    <alternativeName>
        <fullName>Sodium-hydrogen exchanger regulatory factor 2</fullName>
    </alternativeName>
    <alternativeName>
        <fullName>Solute carrier family 9 isoform A3 regulatory factor 2</fullName>
    </alternativeName>
</protein>
<evidence type="ECO:0000250" key="1"/>
<evidence type="ECO:0000250" key="2">
    <source>
        <dbReference type="UniProtKB" id="Q15599"/>
    </source>
</evidence>
<evidence type="ECO:0000250" key="3">
    <source>
        <dbReference type="UniProtKB" id="Q9JHL1"/>
    </source>
</evidence>
<evidence type="ECO:0000255" key="4">
    <source>
        <dbReference type="PROSITE-ProRule" id="PRU00143"/>
    </source>
</evidence>
<evidence type="ECO:0000256" key="5">
    <source>
        <dbReference type="SAM" id="MobiDB-lite"/>
    </source>
</evidence>
<evidence type="ECO:0000269" key="6">
    <source>
    </source>
</evidence>
<evidence type="ECO:0000305" key="7"/>
<proteinExistence type="evidence at protein level"/>
<sequence>MAAPEPLRPRLCRLVRGEQGYGFHLHGEKGRRGQFIRRVEPGSPAEAAALRAGDRLVEVNGVNVEGETHHQVVQRIKAVEGETRLLVVDKETDEELRRRQLTCTEDMAQRGLPPAHDPWEPKPDWARAGSLSSDAGQKDVNGPPRELRPRLCHLRKGPQGYGFNLHSDKSRPGQYIRSVDPGSPAAHSGLCAQDRLIEVNGQNVEGLRHAEVVARIKAKEDEARLLLVDPETDEYFKRLRVTPTEEHVEGPLPSPITNGTSPAQDASAWKRDPFQESGLHLSPTAAEAKEKARATRVNKRAPQMDWNRKREIFSNF</sequence>
<dbReference type="EMBL" id="AF358433">
    <property type="protein sequence ID" value="AAL78310.1"/>
    <property type="molecule type" value="mRNA"/>
</dbReference>
<dbReference type="RefSeq" id="NP_001075576.1">
    <property type="nucleotide sequence ID" value="NM_001082107.1"/>
</dbReference>
<dbReference type="SMR" id="Q8SQG9"/>
<dbReference type="FunCoup" id="Q8SQG9">
    <property type="interactions" value="58"/>
</dbReference>
<dbReference type="IntAct" id="Q8SQG9">
    <property type="interactions" value="2"/>
</dbReference>
<dbReference type="MINT" id="Q8SQG9"/>
<dbReference type="GeneID" id="100008813"/>
<dbReference type="KEGG" id="ocu:100008813"/>
<dbReference type="CTD" id="9351"/>
<dbReference type="InParanoid" id="Q8SQG9"/>
<dbReference type="OrthoDB" id="10007415at2759"/>
<dbReference type="Proteomes" id="UP000001811">
    <property type="component" value="Unplaced"/>
</dbReference>
<dbReference type="GO" id="GO:0016324">
    <property type="term" value="C:apical plasma membrane"/>
    <property type="evidence" value="ECO:0007669"/>
    <property type="project" value="UniProtKB-SubCell"/>
</dbReference>
<dbReference type="GO" id="GO:0012505">
    <property type="term" value="C:endomembrane system"/>
    <property type="evidence" value="ECO:0007669"/>
    <property type="project" value="UniProtKB-SubCell"/>
</dbReference>
<dbReference type="GO" id="GO:0005634">
    <property type="term" value="C:nucleus"/>
    <property type="evidence" value="ECO:0007669"/>
    <property type="project" value="UniProtKB-SubCell"/>
</dbReference>
<dbReference type="GO" id="GO:0043495">
    <property type="term" value="F:protein-membrane adaptor activity"/>
    <property type="evidence" value="ECO:0007669"/>
    <property type="project" value="TreeGrafter"/>
</dbReference>
<dbReference type="GO" id="GO:0031799">
    <property type="term" value="F:type 2 metabotropic glutamate receptor binding"/>
    <property type="evidence" value="ECO:0000353"/>
    <property type="project" value="ARUK-UCL"/>
</dbReference>
<dbReference type="GO" id="GO:0031800">
    <property type="term" value="F:type 3 metabotropic glutamate receptor binding"/>
    <property type="evidence" value="ECO:0000353"/>
    <property type="project" value="ARUK-UCL"/>
</dbReference>
<dbReference type="GO" id="GO:0072659">
    <property type="term" value="P:protein localization to plasma membrane"/>
    <property type="evidence" value="ECO:0007669"/>
    <property type="project" value="TreeGrafter"/>
</dbReference>
<dbReference type="CDD" id="cd06768">
    <property type="entry name" value="PDZ_NHERF-like"/>
    <property type="match status" value="2"/>
</dbReference>
<dbReference type="FunFam" id="2.30.42.10:FF:000068">
    <property type="entry name" value="Na(+)/H(+) exchange regulatory cofactor NHE-RF"/>
    <property type="match status" value="2"/>
</dbReference>
<dbReference type="Gene3D" id="2.30.42.10">
    <property type="match status" value="2"/>
</dbReference>
<dbReference type="InterPro" id="IPR015098">
    <property type="entry name" value="EBP50_C"/>
</dbReference>
<dbReference type="InterPro" id="IPR051067">
    <property type="entry name" value="NHER"/>
</dbReference>
<dbReference type="InterPro" id="IPR017300">
    <property type="entry name" value="NHERF-1/NHERF-2"/>
</dbReference>
<dbReference type="InterPro" id="IPR001478">
    <property type="entry name" value="PDZ"/>
</dbReference>
<dbReference type="InterPro" id="IPR036034">
    <property type="entry name" value="PDZ_sf"/>
</dbReference>
<dbReference type="PANTHER" id="PTHR14191:SF4">
    <property type="entry name" value="NA(+)_H(+) EXCHANGE REGULATORY COFACTOR NHE-RF2"/>
    <property type="match status" value="1"/>
</dbReference>
<dbReference type="PANTHER" id="PTHR14191">
    <property type="entry name" value="PDZ DOMAIN CONTAINING PROTEIN"/>
    <property type="match status" value="1"/>
</dbReference>
<dbReference type="Pfam" id="PF09007">
    <property type="entry name" value="EBP50_C"/>
    <property type="match status" value="2"/>
</dbReference>
<dbReference type="Pfam" id="PF00595">
    <property type="entry name" value="PDZ"/>
    <property type="match status" value="2"/>
</dbReference>
<dbReference type="PIRSF" id="PIRSF037866">
    <property type="entry name" value="EBP50"/>
    <property type="match status" value="1"/>
</dbReference>
<dbReference type="SMART" id="SM00228">
    <property type="entry name" value="PDZ"/>
    <property type="match status" value="2"/>
</dbReference>
<dbReference type="SUPFAM" id="SSF50156">
    <property type="entry name" value="PDZ domain-like"/>
    <property type="match status" value="2"/>
</dbReference>
<dbReference type="PROSITE" id="PS50106">
    <property type="entry name" value="PDZ"/>
    <property type="match status" value="2"/>
</dbReference>
<comment type="function">
    <text evidence="1">Scaffold protein that connects plasma membrane proteins with members of the ezrin/moesin/radixin family and thereby helps to link them to the actin cytoskeleton and to regulate their surface expression. Necessary for cAMP-mediated phosphorylation and inhibition of SLC9A3. May also act as scaffold protein in the nucleus (By similarity).</text>
</comment>
<comment type="subunit">
    <text evidence="1">Homodimer, and heterodimer with NHERF1. Binds ADRB2, SLC9A3, P2RY1, P2YR2, SRY, RDX, PDZK1 and LPAR2 (By similarity). Found in a complex with EZR, PODXL and NHERF2 (By similarity). Interacts (via the PDZ domains) with PODXL (via the C-terminal PDZ-binding motif DTHL); interaction is detected in glomerular epithelium cells (By similarity). Binds PODXL. Interacts with SGK1 and KCNJ1/ROMK1 (By similarity). Interacts (via the PDZ domains) with SLC26A6 (By similarity).</text>
</comment>
<comment type="interaction">
    <interactant intactId="EBI-1174758">
        <id>Q8SQG9</id>
    </interactant>
    <interactant intactId="EBI-8375591">
        <id>Q28645</id>
        <label>PODXL</label>
    </interactant>
    <organismsDiffer>false</organismsDiffer>
    <experiments>7</experiments>
</comment>
<comment type="interaction">
    <interactant intactId="EBI-1174758">
        <id>Q8SQG9</id>
    </interactant>
    <interactant intactId="EBI-1174262">
        <id>Q01814-1</id>
        <label>ATP2B2</label>
    </interactant>
    <organismsDiffer>true</organismsDiffer>
    <experiments>3</experiments>
</comment>
<comment type="subcellular location">
    <subcellularLocation>
        <location evidence="1">Endomembrane system</location>
        <topology evidence="1">Peripheral membrane protein</topology>
    </subcellularLocation>
    <subcellularLocation>
        <location evidence="1">Nucleus</location>
    </subcellularLocation>
    <subcellularLocation>
        <location evidence="1">Apical cell membrane</location>
    </subcellularLocation>
    <text evidence="1">Localizes with EZR and PODXL at the apical cell membrane of glomerular epithelium cells and the sides of the food processes. Nuclear, in a punctate pattern (By similarity).</text>
</comment>
<comment type="tissue specificity">
    <text evidence="6">Detected in kidney glomeruli.</text>
</comment>
<reference key="1">
    <citation type="journal article" date="2002" name="Am. J. Physiol.">
        <title>PDZ domain-mediated interaction of rabbit podocalyxin and Na(+)/H(+) exchange regulatory factor-2.</title>
        <authorList>
            <person name="Li Y."/>
            <person name="Li J."/>
            <person name="Straight S.W."/>
            <person name="Kershaw D.B."/>
        </authorList>
    </citation>
    <scope>NUCLEOTIDE SEQUENCE [MRNA]</scope>
    <scope>SUBCELLULAR LOCATION</scope>
    <scope>TISSUE SPECIFICITY</scope>
    <scope>INTERACTION WITH PODXL</scope>
    <source>
        <tissue>Renal glomerulus</tissue>
    </source>
</reference>
<reference key="2">
    <citation type="journal article" date="2001" name="Biochemistry">
        <title>Oligomerization of NHERF-1 and NHERF-2 PDZ domains: differential regulation by association with receptor carboxyl-termini and by phosphorylation.</title>
        <authorList>
            <person name="Lau A.G."/>
            <person name="Hall R.A."/>
        </authorList>
    </citation>
    <scope>DIMERIZATION</scope>
</reference>
<organism>
    <name type="scientific">Oryctolagus cuniculus</name>
    <name type="common">Rabbit</name>
    <dbReference type="NCBI Taxonomy" id="9986"/>
    <lineage>
        <taxon>Eukaryota</taxon>
        <taxon>Metazoa</taxon>
        <taxon>Chordata</taxon>
        <taxon>Craniata</taxon>
        <taxon>Vertebrata</taxon>
        <taxon>Euteleostomi</taxon>
        <taxon>Mammalia</taxon>
        <taxon>Eutheria</taxon>
        <taxon>Euarchontoglires</taxon>
        <taxon>Glires</taxon>
        <taxon>Lagomorpha</taxon>
        <taxon>Leporidae</taxon>
        <taxon>Oryctolagus</taxon>
    </lineage>
</organism>
<gene>
    <name type="primary">NHERF2</name>
    <name type="synonym">SLC9A3R2</name>
</gene>
<accession>Q8SQG9</accession>
<feature type="chain" id="PRO_0000096807" description="Na(+)/H(+) exchange regulatory cofactor NHE-RF2">
    <location>
        <begin position="1"/>
        <end position="316"/>
    </location>
</feature>
<feature type="domain" description="PDZ 1" evidence="4">
    <location>
        <begin position="11"/>
        <end position="91"/>
    </location>
</feature>
<feature type="domain" description="PDZ 2" evidence="4">
    <location>
        <begin position="151"/>
        <end position="231"/>
    </location>
</feature>
<feature type="region of interest" description="Disordered" evidence="5">
    <location>
        <begin position="109"/>
        <end position="148"/>
    </location>
</feature>
<feature type="region of interest" description="Disordered" evidence="5">
    <location>
        <begin position="244"/>
        <end position="303"/>
    </location>
</feature>
<feature type="compositionally biased region" description="Polar residues" evidence="5">
    <location>
        <begin position="255"/>
        <end position="264"/>
    </location>
</feature>
<feature type="modified residue" description="Phosphoserine" evidence="3">
    <location>
        <position position="130"/>
    </location>
</feature>
<feature type="modified residue" description="Phosphoserine" evidence="2">
    <location>
        <position position="183"/>
    </location>
</feature>
<feature type="modified residue" description="Phosphoserine" evidence="2">
    <location>
        <position position="254"/>
    </location>
</feature>
<feature type="modified residue" description="Phosphoserine" evidence="2">
    <location>
        <position position="282"/>
    </location>
</feature>
<keyword id="KW-1003">Cell membrane</keyword>
<keyword id="KW-0472">Membrane</keyword>
<keyword id="KW-0539">Nucleus</keyword>
<keyword id="KW-0597">Phosphoprotein</keyword>
<keyword id="KW-1185">Reference proteome</keyword>
<keyword id="KW-0677">Repeat</keyword>